<protein>
    <recommendedName>
        <fullName>Dihydroorotate dehydrogenase B (NAD(+)), catalytic subunit</fullName>
        <shortName>DHOD B</shortName>
        <shortName>DHODase B</shortName>
        <shortName>DHOdehase B</shortName>
        <ecNumber>1.3.1.14</ecNumber>
    </recommendedName>
    <alternativeName>
        <fullName>Dihydroorotate oxidase B</fullName>
    </alternativeName>
    <alternativeName>
        <fullName>Orotate reductase (NADH)</fullName>
    </alternativeName>
</protein>
<comment type="function">
    <text evidence="1">Catalyzes the conversion of dihydroorotate to orotate with NAD(+) as electron acceptor.</text>
</comment>
<comment type="catalytic activity">
    <reaction>
        <text>(S)-dihydroorotate + NAD(+) = orotate + NADH + H(+)</text>
        <dbReference type="Rhea" id="RHEA:13513"/>
        <dbReference type="ChEBI" id="CHEBI:15378"/>
        <dbReference type="ChEBI" id="CHEBI:30839"/>
        <dbReference type="ChEBI" id="CHEBI:30864"/>
        <dbReference type="ChEBI" id="CHEBI:57540"/>
        <dbReference type="ChEBI" id="CHEBI:57945"/>
        <dbReference type="EC" id="1.3.1.14"/>
    </reaction>
</comment>
<comment type="cofactor">
    <cofactor evidence="1">
        <name>FMN</name>
        <dbReference type="ChEBI" id="CHEBI:58210"/>
    </cofactor>
    <text evidence="1">Binds 1 FMN per subunit.</text>
</comment>
<comment type="pathway">
    <text>Pyrimidine metabolism; UMP biosynthesis via de novo pathway; orotate from (S)-dihydroorotate (NAD(+) route): step 1/1.</text>
</comment>
<comment type="subunit">
    <text evidence="1">Heterotetramer of 2 PyrK and 2 PyrD type B subunits.</text>
</comment>
<comment type="subcellular location">
    <subcellularLocation>
        <location evidence="1">Cytoplasm</location>
    </subcellularLocation>
</comment>
<comment type="similarity">
    <text evidence="2">Belongs to the dihydroorotate dehydrogenase family. Type 1 subfamily.</text>
</comment>
<feature type="chain" id="PRO_0000409555" description="Dihydroorotate dehydrogenase B (NAD(+)), catalytic subunit">
    <location>
        <begin position="1"/>
        <end position="312"/>
    </location>
</feature>
<feature type="active site" description="Nucleophile">
    <location>
        <position position="134"/>
    </location>
</feature>
<feature type="binding site" evidence="1">
    <location>
        <position position="23"/>
    </location>
    <ligand>
        <name>FMN</name>
        <dbReference type="ChEBI" id="CHEBI:58210"/>
    </ligand>
</feature>
<feature type="binding site" evidence="1">
    <location>
        <begin position="47"/>
        <end position="48"/>
    </location>
    <ligand>
        <name>FMN</name>
        <dbReference type="ChEBI" id="CHEBI:58210"/>
    </ligand>
</feature>
<feature type="binding site" evidence="1">
    <location>
        <position position="47"/>
    </location>
    <ligand>
        <name>substrate</name>
    </ligand>
</feature>
<feature type="binding site" evidence="1">
    <location>
        <begin position="71"/>
        <end position="75"/>
    </location>
    <ligand>
        <name>substrate</name>
    </ligand>
</feature>
<feature type="binding site" evidence="1">
    <location>
        <position position="103"/>
    </location>
    <ligand>
        <name>FMN</name>
        <dbReference type="ChEBI" id="CHEBI:58210"/>
    </ligand>
</feature>
<feature type="binding site" evidence="1">
    <location>
        <position position="131"/>
    </location>
    <ligand>
        <name>FMN</name>
        <dbReference type="ChEBI" id="CHEBI:58210"/>
    </ligand>
</feature>
<feature type="binding site" evidence="1">
    <location>
        <position position="131"/>
    </location>
    <ligand>
        <name>substrate</name>
    </ligand>
</feature>
<feature type="binding site" evidence="1">
    <location>
        <position position="171"/>
    </location>
    <ligand>
        <name>FMN</name>
        <dbReference type="ChEBI" id="CHEBI:58210"/>
    </ligand>
</feature>
<feature type="binding site" evidence="1">
    <location>
        <position position="197"/>
    </location>
    <ligand>
        <name>FMN</name>
        <dbReference type="ChEBI" id="CHEBI:58210"/>
    </ligand>
</feature>
<feature type="binding site" evidence="1">
    <location>
        <begin position="198"/>
        <end position="199"/>
    </location>
    <ligand>
        <name>substrate</name>
    </ligand>
</feature>
<feature type="binding site" evidence="1">
    <location>
        <position position="223"/>
    </location>
    <ligand>
        <name>FMN</name>
        <dbReference type="ChEBI" id="CHEBI:58210"/>
    </ligand>
</feature>
<feature type="binding site" evidence="1">
    <location>
        <begin position="249"/>
        <end position="250"/>
    </location>
    <ligand>
        <name>FMN</name>
        <dbReference type="ChEBI" id="CHEBI:58210"/>
    </ligand>
</feature>
<feature type="binding site" evidence="1">
    <location>
        <begin position="271"/>
        <end position="272"/>
    </location>
    <ligand>
        <name>FMN</name>
        <dbReference type="ChEBI" id="CHEBI:58210"/>
    </ligand>
</feature>
<reference key="1">
    <citation type="journal article" date="2001" name="Science">
        <title>Complete genome sequence of a virulent isolate of Streptococcus pneumoniae.</title>
        <authorList>
            <person name="Tettelin H."/>
            <person name="Nelson K.E."/>
            <person name="Paulsen I.T."/>
            <person name="Eisen J.A."/>
            <person name="Read T.D."/>
            <person name="Peterson S.N."/>
            <person name="Heidelberg J.F."/>
            <person name="DeBoy R.T."/>
            <person name="Haft D.H."/>
            <person name="Dodson R.J."/>
            <person name="Durkin A.S."/>
            <person name="Gwinn M.L."/>
            <person name="Kolonay J.F."/>
            <person name="Nelson W.C."/>
            <person name="Peterson J.D."/>
            <person name="Umayam L.A."/>
            <person name="White O."/>
            <person name="Salzberg S.L."/>
            <person name="Lewis M.R."/>
            <person name="Radune D."/>
            <person name="Holtzapple E.K."/>
            <person name="Khouri H.M."/>
            <person name="Wolf A.M."/>
            <person name="Utterback T.R."/>
            <person name="Hansen C.L."/>
            <person name="McDonald L.A."/>
            <person name="Feldblyum T.V."/>
            <person name="Angiuoli S.V."/>
            <person name="Dickinson T."/>
            <person name="Hickey E.K."/>
            <person name="Holt I.E."/>
            <person name="Loftus B.J."/>
            <person name="Yang F."/>
            <person name="Smith H.O."/>
            <person name="Venter J.C."/>
            <person name="Dougherty B.A."/>
            <person name="Morrison D.A."/>
            <person name="Hollingshead S.K."/>
            <person name="Fraser C.M."/>
        </authorList>
    </citation>
    <scope>NUCLEOTIDE SEQUENCE [LARGE SCALE GENOMIC DNA]</scope>
    <source>
        <strain>ATCC BAA-334 / TIGR4</strain>
    </source>
</reference>
<organism>
    <name type="scientific">Streptococcus pneumoniae serotype 4 (strain ATCC BAA-334 / TIGR4)</name>
    <dbReference type="NCBI Taxonomy" id="170187"/>
    <lineage>
        <taxon>Bacteria</taxon>
        <taxon>Bacillati</taxon>
        <taxon>Bacillota</taxon>
        <taxon>Bacilli</taxon>
        <taxon>Lactobacillales</taxon>
        <taxon>Streptococcaceae</taxon>
        <taxon>Streptococcus</taxon>
    </lineage>
</organism>
<keyword id="KW-0963">Cytoplasm</keyword>
<keyword id="KW-0285">Flavoprotein</keyword>
<keyword id="KW-0288">FMN</keyword>
<keyword id="KW-0520">NAD</keyword>
<keyword id="KW-0560">Oxidoreductase</keyword>
<keyword id="KW-0665">Pyrimidine biosynthesis</keyword>
<keyword id="KW-1185">Reference proteome</keyword>
<sequence>MTTNRLQVSLPGLDLKNPIIPASGCFGFGQEYAKYYDLDLLGSIMIKATTLEPRFGNPTPRVAETPAGMLNAIGLQNPGLEVVLAEKLPWLEREYPNLPIIANVAGFSKQEYAAVSHGISKATNVKAIELNISCPNVDHCNHGLLIGQDPDLAYDVVKAAVEASEVPVYVKLTPSVTDIVTVAKAAEDAGASGLTMINTLVGMRFDLKTRKPILANGTGGMSGPAVFPVALKLIRQVAQTTDLPIIGMGGVDSAEAALEMYLAGASAIGVGTANFTNPYACPDIIENLPKVMDKYGISSLEELRQEVKESLR</sequence>
<gene>
    <name type="primary">pyrDB</name>
    <name type="ordered locus">SP_0964</name>
</gene>
<dbReference type="EC" id="1.3.1.14"/>
<dbReference type="EMBL" id="AE005672">
    <property type="protein sequence ID" value="AAK75085.1"/>
    <property type="molecule type" value="Genomic_DNA"/>
</dbReference>
<dbReference type="PIR" id="D95111">
    <property type="entry name" value="D95111"/>
</dbReference>
<dbReference type="RefSeq" id="WP_000210693.1">
    <property type="nucleotide sequence ID" value="NZ_CP155539.1"/>
</dbReference>
<dbReference type="SMR" id="Q97R65"/>
<dbReference type="PaxDb" id="170187-SP_0964"/>
<dbReference type="EnsemblBacteria" id="AAK75085">
    <property type="protein sequence ID" value="AAK75085"/>
    <property type="gene ID" value="SP_0964"/>
</dbReference>
<dbReference type="KEGG" id="spn:SP_0964"/>
<dbReference type="eggNOG" id="COG0167">
    <property type="taxonomic scope" value="Bacteria"/>
</dbReference>
<dbReference type="PhylomeDB" id="Q97R65"/>
<dbReference type="BioCyc" id="SPNE170187:G1FZB-992-MONOMER"/>
<dbReference type="UniPathway" id="UPA00070">
    <property type="reaction ID" value="UER00945"/>
</dbReference>
<dbReference type="Proteomes" id="UP000000585">
    <property type="component" value="Chromosome"/>
</dbReference>
<dbReference type="GO" id="GO:0005737">
    <property type="term" value="C:cytoplasm"/>
    <property type="evidence" value="ECO:0007669"/>
    <property type="project" value="UniProtKB-SubCell"/>
</dbReference>
<dbReference type="GO" id="GO:0004589">
    <property type="term" value="F:dihydroorotate dehydrogenase (NAD+) activity"/>
    <property type="evidence" value="ECO:0007669"/>
    <property type="project" value="UniProtKB-EC"/>
</dbReference>
<dbReference type="GO" id="GO:0006207">
    <property type="term" value="P:'de novo' pyrimidine nucleobase biosynthetic process"/>
    <property type="evidence" value="ECO:0007669"/>
    <property type="project" value="InterPro"/>
</dbReference>
<dbReference type="GO" id="GO:0044205">
    <property type="term" value="P:'de novo' UMP biosynthetic process"/>
    <property type="evidence" value="ECO:0007669"/>
    <property type="project" value="UniProtKB-UniRule"/>
</dbReference>
<dbReference type="CDD" id="cd04740">
    <property type="entry name" value="DHOD_1B_like"/>
    <property type="match status" value="1"/>
</dbReference>
<dbReference type="FunFam" id="3.20.20.70:FF:000069">
    <property type="entry name" value="Dihydroorotate dehydrogenase"/>
    <property type="match status" value="1"/>
</dbReference>
<dbReference type="Gene3D" id="3.20.20.70">
    <property type="entry name" value="Aldolase class I"/>
    <property type="match status" value="1"/>
</dbReference>
<dbReference type="HAMAP" id="MF_00224">
    <property type="entry name" value="DHO_dh_type1"/>
    <property type="match status" value="1"/>
</dbReference>
<dbReference type="InterPro" id="IPR013785">
    <property type="entry name" value="Aldolase_TIM"/>
</dbReference>
<dbReference type="InterPro" id="IPR050074">
    <property type="entry name" value="DHO_dehydrogenase"/>
</dbReference>
<dbReference type="InterPro" id="IPR033888">
    <property type="entry name" value="DHOD_1B"/>
</dbReference>
<dbReference type="InterPro" id="IPR024920">
    <property type="entry name" value="Dihydroorotate_DH_1"/>
</dbReference>
<dbReference type="InterPro" id="IPR012135">
    <property type="entry name" value="Dihydroorotate_DH_1_2"/>
</dbReference>
<dbReference type="InterPro" id="IPR005720">
    <property type="entry name" value="Dihydroorotate_DH_cat"/>
</dbReference>
<dbReference type="InterPro" id="IPR001295">
    <property type="entry name" value="Dihydroorotate_DH_CS"/>
</dbReference>
<dbReference type="InterPro" id="IPR049622">
    <property type="entry name" value="Dihydroorotate_DH_I"/>
</dbReference>
<dbReference type="NCBIfam" id="NF005574">
    <property type="entry name" value="PRK07259.1"/>
    <property type="match status" value="1"/>
</dbReference>
<dbReference type="NCBIfam" id="TIGR01037">
    <property type="entry name" value="pyrD_sub1_fam"/>
    <property type="match status" value="1"/>
</dbReference>
<dbReference type="PANTHER" id="PTHR48109:SF1">
    <property type="entry name" value="DIHYDROOROTATE DEHYDROGENASE (FUMARATE)"/>
    <property type="match status" value="1"/>
</dbReference>
<dbReference type="PANTHER" id="PTHR48109">
    <property type="entry name" value="DIHYDROOROTATE DEHYDROGENASE (QUINONE), MITOCHONDRIAL-RELATED"/>
    <property type="match status" value="1"/>
</dbReference>
<dbReference type="Pfam" id="PF01180">
    <property type="entry name" value="DHO_dh"/>
    <property type="match status" value="1"/>
</dbReference>
<dbReference type="PIRSF" id="PIRSF000164">
    <property type="entry name" value="DHO_oxidase"/>
    <property type="match status" value="1"/>
</dbReference>
<dbReference type="SUPFAM" id="SSF51395">
    <property type="entry name" value="FMN-linked oxidoreductases"/>
    <property type="match status" value="1"/>
</dbReference>
<dbReference type="PROSITE" id="PS00911">
    <property type="entry name" value="DHODEHASE_1"/>
    <property type="match status" value="1"/>
</dbReference>
<dbReference type="PROSITE" id="PS00912">
    <property type="entry name" value="DHODEHASE_2"/>
    <property type="match status" value="1"/>
</dbReference>
<name>PYRDB_STRPN</name>
<evidence type="ECO:0000250" key="1"/>
<evidence type="ECO:0000305" key="2"/>
<accession>Q97R65</accession>
<proteinExistence type="inferred from homology"/>